<reference key="1">
    <citation type="journal article" date="2000" name="Science">
        <title>The genome sequence of Drosophila melanogaster.</title>
        <authorList>
            <person name="Adams M.D."/>
            <person name="Celniker S.E."/>
            <person name="Holt R.A."/>
            <person name="Evans C.A."/>
            <person name="Gocayne J.D."/>
            <person name="Amanatides P.G."/>
            <person name="Scherer S.E."/>
            <person name="Li P.W."/>
            <person name="Hoskins R.A."/>
            <person name="Galle R.F."/>
            <person name="George R.A."/>
            <person name="Lewis S.E."/>
            <person name="Richards S."/>
            <person name="Ashburner M."/>
            <person name="Henderson S.N."/>
            <person name="Sutton G.G."/>
            <person name="Wortman J.R."/>
            <person name="Yandell M.D."/>
            <person name="Zhang Q."/>
            <person name="Chen L.X."/>
            <person name="Brandon R.C."/>
            <person name="Rogers Y.-H.C."/>
            <person name="Blazej R.G."/>
            <person name="Champe M."/>
            <person name="Pfeiffer B.D."/>
            <person name="Wan K.H."/>
            <person name="Doyle C."/>
            <person name="Baxter E.G."/>
            <person name="Helt G."/>
            <person name="Nelson C.R."/>
            <person name="Miklos G.L.G."/>
            <person name="Abril J.F."/>
            <person name="Agbayani A."/>
            <person name="An H.-J."/>
            <person name="Andrews-Pfannkoch C."/>
            <person name="Baldwin D."/>
            <person name="Ballew R.M."/>
            <person name="Basu A."/>
            <person name="Baxendale J."/>
            <person name="Bayraktaroglu L."/>
            <person name="Beasley E.M."/>
            <person name="Beeson K.Y."/>
            <person name="Benos P.V."/>
            <person name="Berman B.P."/>
            <person name="Bhandari D."/>
            <person name="Bolshakov S."/>
            <person name="Borkova D."/>
            <person name="Botchan M.R."/>
            <person name="Bouck J."/>
            <person name="Brokstein P."/>
            <person name="Brottier P."/>
            <person name="Burtis K.C."/>
            <person name="Busam D.A."/>
            <person name="Butler H."/>
            <person name="Cadieu E."/>
            <person name="Center A."/>
            <person name="Chandra I."/>
            <person name="Cherry J.M."/>
            <person name="Cawley S."/>
            <person name="Dahlke C."/>
            <person name="Davenport L.B."/>
            <person name="Davies P."/>
            <person name="de Pablos B."/>
            <person name="Delcher A."/>
            <person name="Deng Z."/>
            <person name="Mays A.D."/>
            <person name="Dew I."/>
            <person name="Dietz S.M."/>
            <person name="Dodson K."/>
            <person name="Doup L.E."/>
            <person name="Downes M."/>
            <person name="Dugan-Rocha S."/>
            <person name="Dunkov B.C."/>
            <person name="Dunn P."/>
            <person name="Durbin K.J."/>
            <person name="Evangelista C.C."/>
            <person name="Ferraz C."/>
            <person name="Ferriera S."/>
            <person name="Fleischmann W."/>
            <person name="Fosler C."/>
            <person name="Gabrielian A.E."/>
            <person name="Garg N.S."/>
            <person name="Gelbart W.M."/>
            <person name="Glasser K."/>
            <person name="Glodek A."/>
            <person name="Gong F."/>
            <person name="Gorrell J.H."/>
            <person name="Gu Z."/>
            <person name="Guan P."/>
            <person name="Harris M."/>
            <person name="Harris N.L."/>
            <person name="Harvey D.A."/>
            <person name="Heiman T.J."/>
            <person name="Hernandez J.R."/>
            <person name="Houck J."/>
            <person name="Hostin D."/>
            <person name="Houston K.A."/>
            <person name="Howland T.J."/>
            <person name="Wei M.-H."/>
            <person name="Ibegwam C."/>
            <person name="Jalali M."/>
            <person name="Kalush F."/>
            <person name="Karpen G.H."/>
            <person name="Ke Z."/>
            <person name="Kennison J.A."/>
            <person name="Ketchum K.A."/>
            <person name="Kimmel B.E."/>
            <person name="Kodira C.D."/>
            <person name="Kraft C.L."/>
            <person name="Kravitz S."/>
            <person name="Kulp D."/>
            <person name="Lai Z."/>
            <person name="Lasko P."/>
            <person name="Lei Y."/>
            <person name="Levitsky A.A."/>
            <person name="Li J.H."/>
            <person name="Li Z."/>
            <person name="Liang Y."/>
            <person name="Lin X."/>
            <person name="Liu X."/>
            <person name="Mattei B."/>
            <person name="McIntosh T.C."/>
            <person name="McLeod M.P."/>
            <person name="McPherson D."/>
            <person name="Merkulov G."/>
            <person name="Milshina N.V."/>
            <person name="Mobarry C."/>
            <person name="Morris J."/>
            <person name="Moshrefi A."/>
            <person name="Mount S.M."/>
            <person name="Moy M."/>
            <person name="Murphy B."/>
            <person name="Murphy L."/>
            <person name="Muzny D.M."/>
            <person name="Nelson D.L."/>
            <person name="Nelson D.R."/>
            <person name="Nelson K.A."/>
            <person name="Nixon K."/>
            <person name="Nusskern D.R."/>
            <person name="Pacleb J.M."/>
            <person name="Palazzolo M."/>
            <person name="Pittman G.S."/>
            <person name="Pan S."/>
            <person name="Pollard J."/>
            <person name="Puri V."/>
            <person name="Reese M.G."/>
            <person name="Reinert K."/>
            <person name="Remington K."/>
            <person name="Saunders R.D.C."/>
            <person name="Scheeler F."/>
            <person name="Shen H."/>
            <person name="Shue B.C."/>
            <person name="Siden-Kiamos I."/>
            <person name="Simpson M."/>
            <person name="Skupski M.P."/>
            <person name="Smith T.J."/>
            <person name="Spier E."/>
            <person name="Spradling A.C."/>
            <person name="Stapleton M."/>
            <person name="Strong R."/>
            <person name="Sun E."/>
            <person name="Svirskas R."/>
            <person name="Tector C."/>
            <person name="Turner R."/>
            <person name="Venter E."/>
            <person name="Wang A.H."/>
            <person name="Wang X."/>
            <person name="Wang Z.-Y."/>
            <person name="Wassarman D.A."/>
            <person name="Weinstock G.M."/>
            <person name="Weissenbach J."/>
            <person name="Williams S.M."/>
            <person name="Woodage T."/>
            <person name="Worley K.C."/>
            <person name="Wu D."/>
            <person name="Yang S."/>
            <person name="Yao Q.A."/>
            <person name="Ye J."/>
            <person name="Yeh R.-F."/>
            <person name="Zaveri J.S."/>
            <person name="Zhan M."/>
            <person name="Zhang G."/>
            <person name="Zhao Q."/>
            <person name="Zheng L."/>
            <person name="Zheng X.H."/>
            <person name="Zhong F.N."/>
            <person name="Zhong W."/>
            <person name="Zhou X."/>
            <person name="Zhu S.C."/>
            <person name="Zhu X."/>
            <person name="Smith H.O."/>
            <person name="Gibbs R.A."/>
            <person name="Myers E.W."/>
            <person name="Rubin G.M."/>
            <person name="Venter J.C."/>
        </authorList>
    </citation>
    <scope>NUCLEOTIDE SEQUENCE [LARGE SCALE GENOMIC DNA]</scope>
    <source>
        <strain>Berkeley</strain>
    </source>
</reference>
<reference key="2">
    <citation type="journal article" date="2002" name="Genome Biol.">
        <title>Annotation of the Drosophila melanogaster euchromatic genome: a systematic review.</title>
        <authorList>
            <person name="Misra S."/>
            <person name="Crosby M.A."/>
            <person name="Mungall C.J."/>
            <person name="Matthews B.B."/>
            <person name="Campbell K.S."/>
            <person name="Hradecky P."/>
            <person name="Huang Y."/>
            <person name="Kaminker J.S."/>
            <person name="Millburn G.H."/>
            <person name="Prochnik S.E."/>
            <person name="Smith C.D."/>
            <person name="Tupy J.L."/>
            <person name="Whitfield E.J."/>
            <person name="Bayraktaroglu L."/>
            <person name="Berman B.P."/>
            <person name="Bettencourt B.R."/>
            <person name="Celniker S.E."/>
            <person name="de Grey A.D.N.J."/>
            <person name="Drysdale R.A."/>
            <person name="Harris N.L."/>
            <person name="Richter J."/>
            <person name="Russo S."/>
            <person name="Schroeder A.J."/>
            <person name="Shu S.Q."/>
            <person name="Stapleton M."/>
            <person name="Yamada C."/>
            <person name="Ashburner M."/>
            <person name="Gelbart W.M."/>
            <person name="Rubin G.M."/>
            <person name="Lewis S.E."/>
        </authorList>
    </citation>
    <scope>GENOME REANNOTATION</scope>
    <source>
        <strain>Berkeley</strain>
    </source>
</reference>
<reference key="3">
    <citation type="journal article" date="2002" name="Genome Biol.">
        <title>A Drosophila full-length cDNA resource.</title>
        <authorList>
            <person name="Stapleton M."/>
            <person name="Carlson J.W."/>
            <person name="Brokstein P."/>
            <person name="Yu C."/>
            <person name="Champe M."/>
            <person name="George R.A."/>
            <person name="Guarin H."/>
            <person name="Kronmiller B."/>
            <person name="Pacleb J.M."/>
            <person name="Park S."/>
            <person name="Wan K.H."/>
            <person name="Rubin G.M."/>
            <person name="Celniker S.E."/>
        </authorList>
    </citation>
    <scope>NUCLEOTIDE SEQUENCE [LARGE SCALE MRNA]</scope>
    <source>
        <strain>Berkeley</strain>
        <tissue>Embryo</tissue>
    </source>
</reference>
<reference key="4">
    <citation type="journal article" date="2008" name="J. Proteome Res.">
        <title>Phosphoproteome analysis of Drosophila melanogaster embryos.</title>
        <authorList>
            <person name="Zhai B."/>
            <person name="Villen J."/>
            <person name="Beausoleil S.A."/>
            <person name="Mintseris J."/>
            <person name="Gygi S.P."/>
        </authorList>
    </citation>
    <scope>PHOSPHORYLATION [LARGE SCALE ANALYSIS] AT SER-77 AND SER-79</scope>
    <scope>IDENTIFICATION BY MASS SPECTROMETRY</scope>
    <source>
        <tissue>Embryo</tissue>
    </source>
</reference>
<reference key="5">
    <citation type="journal article" date="2023" name="EMBO Rep.">
        <title>Distinct biogenesis pathways may have led to functional divergence of the human and Drosophila Arglu1 sisRNA.</title>
        <authorList>
            <person name="Chan S.N."/>
            <person name="Pek J.W."/>
        </authorList>
    </citation>
    <scope>FUNCTION</scope>
    <scope>INTERACTION WITH U1-SNRNP</scope>
    <scope>SUBCELLULAR LOCATION</scope>
    <scope>INDUCTION BY AUTOREGULATION</scope>
</reference>
<gene>
    <name evidence="7" type="primary">Arglu1</name>
    <name evidence="7" type="ORF">CG31712</name>
</gene>
<evidence type="ECO:0000255" key="1"/>
<evidence type="ECO:0000256" key="2">
    <source>
        <dbReference type="SAM" id="MobiDB-lite"/>
    </source>
</evidence>
<evidence type="ECO:0000269" key="3">
    <source>
    </source>
</evidence>
<evidence type="ECO:0000269" key="4">
    <source>
    </source>
</evidence>
<evidence type="ECO:0000303" key="5">
    <source>
    </source>
</evidence>
<evidence type="ECO:0000305" key="6"/>
<evidence type="ECO:0000312" key="7">
    <source>
        <dbReference type="FlyBase" id="FBgn0051712"/>
    </source>
</evidence>
<evidence type="ECO:0000312" key="8">
    <source>
        <dbReference type="Proteomes" id="UP000000803"/>
    </source>
</evidence>
<keyword id="KW-0175">Coiled coil</keyword>
<keyword id="KW-0507">mRNA processing</keyword>
<keyword id="KW-0508">mRNA splicing</keyword>
<keyword id="KW-0539">Nucleus</keyword>
<keyword id="KW-0597">Phosphoprotein</keyword>
<keyword id="KW-1185">Reference proteome</keyword>
<keyword id="KW-0694">RNA-binding</keyword>
<dbReference type="EMBL" id="AE014134">
    <property type="protein sequence ID" value="AAF52833.3"/>
    <property type="molecule type" value="Genomic_DNA"/>
</dbReference>
<dbReference type="EMBL" id="AY069357">
    <property type="protein sequence ID" value="AAL39502.1"/>
    <property type="molecule type" value="mRNA"/>
</dbReference>
<dbReference type="RefSeq" id="NP_609327.3">
    <property type="nucleotide sequence ID" value="NM_135483.5"/>
</dbReference>
<dbReference type="SMR" id="Q9VL63"/>
<dbReference type="BioGRID" id="60414">
    <property type="interactions" value="14"/>
</dbReference>
<dbReference type="FunCoup" id="Q9VL63">
    <property type="interactions" value="1289"/>
</dbReference>
<dbReference type="IntAct" id="Q9VL63">
    <property type="interactions" value="8"/>
</dbReference>
<dbReference type="STRING" id="7227.FBpp0079491"/>
<dbReference type="iPTMnet" id="Q9VL63"/>
<dbReference type="PaxDb" id="7227-FBpp0079491"/>
<dbReference type="DNASU" id="34320"/>
<dbReference type="EnsemblMetazoa" id="FBtr0079896">
    <property type="protein sequence ID" value="FBpp0079491"/>
    <property type="gene ID" value="FBgn0051712"/>
</dbReference>
<dbReference type="GeneID" id="34320"/>
<dbReference type="KEGG" id="dme:Dmel_CG31712"/>
<dbReference type="UCSC" id="CG31712-RA">
    <property type="organism name" value="d. melanogaster"/>
</dbReference>
<dbReference type="AGR" id="FB:FBgn0051712"/>
<dbReference type="CTD" id="55082"/>
<dbReference type="FlyBase" id="FBgn0051712">
    <property type="gene designation" value="Arglu1"/>
</dbReference>
<dbReference type="VEuPathDB" id="VectorBase:FBgn0051712"/>
<dbReference type="eggNOG" id="ENOG502QPR5">
    <property type="taxonomic scope" value="Eukaryota"/>
</dbReference>
<dbReference type="GeneTree" id="ENSGT00730000111249"/>
<dbReference type="HOGENOM" id="CLU_076749_0_1_1"/>
<dbReference type="InParanoid" id="Q9VL63"/>
<dbReference type="OMA" id="VNSHGRH"/>
<dbReference type="OrthoDB" id="5862042at2759"/>
<dbReference type="PhylomeDB" id="Q9VL63"/>
<dbReference type="BioGRID-ORCS" id="34320">
    <property type="hits" value="0 hits in 1 CRISPR screen"/>
</dbReference>
<dbReference type="GenomeRNAi" id="34320"/>
<dbReference type="PRO" id="PR:Q9VL63"/>
<dbReference type="Proteomes" id="UP000000803">
    <property type="component" value="Chromosome 2L"/>
</dbReference>
<dbReference type="Bgee" id="FBgn0051712">
    <property type="expression patterns" value="Expressed in antennal lobe projection neuron (Drosophila) in insect head and 295 other cell types or tissues"/>
</dbReference>
<dbReference type="ExpressionAtlas" id="Q9VL63">
    <property type="expression patterns" value="baseline and differential"/>
</dbReference>
<dbReference type="GO" id="GO:0005739">
    <property type="term" value="C:mitochondrion"/>
    <property type="evidence" value="ECO:0000318"/>
    <property type="project" value="GO_Central"/>
</dbReference>
<dbReference type="GO" id="GO:0016607">
    <property type="term" value="C:nuclear speck"/>
    <property type="evidence" value="ECO:0007669"/>
    <property type="project" value="UniProtKB-SubCell"/>
</dbReference>
<dbReference type="GO" id="GO:0005654">
    <property type="term" value="C:nucleoplasm"/>
    <property type="evidence" value="ECO:0000318"/>
    <property type="project" value="GO_Central"/>
</dbReference>
<dbReference type="GO" id="GO:0005634">
    <property type="term" value="C:nucleus"/>
    <property type="evidence" value="ECO:0000314"/>
    <property type="project" value="FlyBase"/>
</dbReference>
<dbReference type="GO" id="GO:0036002">
    <property type="term" value="F:pre-mRNA binding"/>
    <property type="evidence" value="ECO:0000314"/>
    <property type="project" value="FlyBase"/>
</dbReference>
<dbReference type="GO" id="GO:1990446">
    <property type="term" value="F:U1 snRNP binding"/>
    <property type="evidence" value="ECO:0000314"/>
    <property type="project" value="FlyBase"/>
</dbReference>
<dbReference type="GO" id="GO:0006397">
    <property type="term" value="P:mRNA processing"/>
    <property type="evidence" value="ECO:0007669"/>
    <property type="project" value="UniProtKB-KW"/>
</dbReference>
<dbReference type="GO" id="GO:0008380">
    <property type="term" value="P:RNA splicing"/>
    <property type="evidence" value="ECO:0007669"/>
    <property type="project" value="UniProtKB-KW"/>
</dbReference>
<dbReference type="InterPro" id="IPR033371">
    <property type="entry name" value="ARGLU1"/>
</dbReference>
<dbReference type="PANTHER" id="PTHR31711">
    <property type="entry name" value="ARGININE AND GLUTAMATE-RICH PROTEIN 1"/>
    <property type="match status" value="1"/>
</dbReference>
<dbReference type="PANTHER" id="PTHR31711:SF1">
    <property type="entry name" value="ARGININE AND GLUTAMATE-RICH PROTEIN 1"/>
    <property type="match status" value="1"/>
</dbReference>
<dbReference type="Pfam" id="PF15346">
    <property type="entry name" value="ARGLU"/>
    <property type="match status" value="1"/>
</dbReference>
<proteinExistence type="evidence at protein level"/>
<name>ARGL1_DROME</name>
<organism evidence="8">
    <name type="scientific">Drosophila melanogaster</name>
    <name type="common">Fruit fly</name>
    <dbReference type="NCBI Taxonomy" id="7227"/>
    <lineage>
        <taxon>Eukaryota</taxon>
        <taxon>Metazoa</taxon>
        <taxon>Ecdysozoa</taxon>
        <taxon>Arthropoda</taxon>
        <taxon>Hexapoda</taxon>
        <taxon>Insecta</taxon>
        <taxon>Pterygota</taxon>
        <taxon>Neoptera</taxon>
        <taxon>Endopterygota</taxon>
        <taxon>Diptera</taxon>
        <taxon>Brachycera</taxon>
        <taxon>Muscomorpha</taxon>
        <taxon>Ephydroidea</taxon>
        <taxon>Drosophilidae</taxon>
        <taxon>Drosophila</taxon>
        <taxon>Sophophora</taxon>
    </lineage>
</organism>
<accession>Q9VL63</accession>
<accession>Q8T0F4</accession>
<protein>
    <recommendedName>
        <fullName evidence="6">Arginine and glutamate-rich protein 1</fullName>
        <shortName evidence="5">dArglu1</shortName>
    </recommendedName>
</protein>
<feature type="chain" id="PRO_0000288446" description="Arginine and glutamate-rich protein 1">
    <location>
        <begin position="1"/>
        <end position="290"/>
    </location>
</feature>
<feature type="region of interest" description="Disordered" evidence="2">
    <location>
        <begin position="1"/>
        <end position="137"/>
    </location>
</feature>
<feature type="region of interest" description="Disordered" evidence="2">
    <location>
        <begin position="193"/>
        <end position="216"/>
    </location>
</feature>
<feature type="region of interest" description="Disordered" evidence="2">
    <location>
        <begin position="249"/>
        <end position="290"/>
    </location>
</feature>
<feature type="coiled-coil region" evidence="1">
    <location>
        <begin position="111"/>
        <end position="269"/>
    </location>
</feature>
<feature type="compositionally biased region" description="Polar residues" evidence="2">
    <location>
        <begin position="1"/>
        <end position="10"/>
    </location>
</feature>
<feature type="compositionally biased region" description="Basic residues" evidence="2">
    <location>
        <begin position="12"/>
        <end position="28"/>
    </location>
</feature>
<feature type="compositionally biased region" description="Basic and acidic residues" evidence="2">
    <location>
        <begin position="29"/>
        <end position="44"/>
    </location>
</feature>
<feature type="compositionally biased region" description="Basic and acidic residues" evidence="2">
    <location>
        <begin position="53"/>
        <end position="76"/>
    </location>
</feature>
<feature type="compositionally biased region" description="Low complexity" evidence="2">
    <location>
        <begin position="88"/>
        <end position="99"/>
    </location>
</feature>
<feature type="compositionally biased region" description="Basic and acidic residues" evidence="2">
    <location>
        <begin position="124"/>
        <end position="137"/>
    </location>
</feature>
<feature type="compositionally biased region" description="Basic and acidic residues" evidence="2">
    <location>
        <begin position="249"/>
        <end position="269"/>
    </location>
</feature>
<feature type="modified residue" description="Phosphoserine" evidence="3">
    <location>
        <position position="77"/>
    </location>
</feature>
<feature type="modified residue" description="Phosphoserine" evidence="3">
    <location>
        <position position="79"/>
    </location>
</feature>
<sequence>MGSRSRTPSPSGKRRHHKSKHKKRSKSHHDHERPSTRTDRDKSSEVNNHGRHRERDRDRERDRHRSDRHTERDYRHSPSILKSRKRSSSSSSDSQYSEQESQRSKQKRSRFKKLDEQNQMQVERLAEMERQRRAKELEQKTIEEEAAKRIEMLVKKRVEEELEKRRDEIEQEVNRRVETAKAEMEREMMLELERRREQIREEERRREEDEKQKREELEEILAENNRKIEEAQRKLAEERLAIIEEQRLMDEERQRMRKEQEKRVKEEQKVILGKNNSRPKLSFSLKPGAL</sequence>
<comment type="function">
    <text evidence="4">Post-transcriptional regulator of gene expression; modulates splicing and premature cleavage at cryptic polyadenylation sites of its own pre-mRNA through binding and regulation of the U1-snRNP complex.</text>
</comment>
<comment type="subunit">
    <text evidence="4">Associates with the U1-snRNP complex; the interaction is enhanced by binding of Arglu1 to a stable intronic sequence RNA (sisRNA) produced from the Arglu1 gene by premature cleavage.</text>
</comment>
<comment type="subcellular location">
    <subcellularLocation>
        <location evidence="4">Nucleus</location>
    </subcellularLocation>
    <subcellularLocation>
        <location evidence="4">Nucleus speckle</location>
    </subcellularLocation>
    <text evidence="4">Phase separation and localization to nuclear speckle-like structures is enhanced by binding to sisRNA.</text>
</comment>
<comment type="induction">
    <text evidence="4">Post-transcriptionally regulated by autoregulatory feedback loop (PubMed:36533631). Splicing is regulated by a stable intronic sequence RNA (sisRNA) resulting from premature cleavage of the pre-mRNA at a cryptic polyadenylation site within intron 2 (PubMed:36533631). Premature cleavage is inhibited by the U1-snRNP complex by telescripting (PubMed:36533631). Arglu1 protein stimulates premature cleavage of its own pre-mRNA by binding and inhibiting the activity of the U1-snRNP complex (PubMed:36533631). Arglu1 sisRNA represses splicing and enhances premature cleavage of Arglu1 pre-mRNA by enhancing binding of U1-snRNP to Arglu1 protein and sequestering it by stimulating phase separation (PubMed:36533631).</text>
</comment>
<comment type="similarity">
    <text evidence="6">Belongs to the ARGLU1 family.</text>
</comment>